<dbReference type="EMBL" id="CP000127">
    <property type="protein sequence ID" value="ABA59052.1"/>
    <property type="molecule type" value="Genomic_DNA"/>
</dbReference>
<dbReference type="RefSeq" id="WP_004164034.1">
    <property type="nucleotide sequence ID" value="NC_007484.1"/>
</dbReference>
<dbReference type="SMR" id="Q3J7Z4"/>
<dbReference type="FunCoup" id="Q3J7Z4">
    <property type="interactions" value="72"/>
</dbReference>
<dbReference type="STRING" id="323261.Noc_2599"/>
<dbReference type="KEGG" id="noc:Noc_2599"/>
<dbReference type="eggNOG" id="COG1495">
    <property type="taxonomic scope" value="Bacteria"/>
</dbReference>
<dbReference type="HOGENOM" id="CLU_098660_1_1_6"/>
<dbReference type="InParanoid" id="Q3J7Z4"/>
<dbReference type="Proteomes" id="UP000006838">
    <property type="component" value="Chromosome"/>
</dbReference>
<dbReference type="GO" id="GO:0005886">
    <property type="term" value="C:plasma membrane"/>
    <property type="evidence" value="ECO:0007669"/>
    <property type="project" value="UniProtKB-SubCell"/>
</dbReference>
<dbReference type="GO" id="GO:0009055">
    <property type="term" value="F:electron transfer activity"/>
    <property type="evidence" value="ECO:0007669"/>
    <property type="project" value="UniProtKB-UniRule"/>
</dbReference>
<dbReference type="GO" id="GO:0015035">
    <property type="term" value="F:protein-disulfide reductase activity"/>
    <property type="evidence" value="ECO:0007669"/>
    <property type="project" value="UniProtKB-UniRule"/>
</dbReference>
<dbReference type="GO" id="GO:0006457">
    <property type="term" value="P:protein folding"/>
    <property type="evidence" value="ECO:0007669"/>
    <property type="project" value="InterPro"/>
</dbReference>
<dbReference type="Gene3D" id="1.20.1550.10">
    <property type="entry name" value="DsbB-like"/>
    <property type="match status" value="1"/>
</dbReference>
<dbReference type="HAMAP" id="MF_00286">
    <property type="entry name" value="DsbB"/>
    <property type="match status" value="1"/>
</dbReference>
<dbReference type="InterPro" id="IPR003752">
    <property type="entry name" value="DiS_bond_form_DsbB/BdbC"/>
</dbReference>
<dbReference type="InterPro" id="IPR022920">
    <property type="entry name" value="Disulphide_bond_form_DsbB"/>
</dbReference>
<dbReference type="InterPro" id="IPR050183">
    <property type="entry name" value="DsbB"/>
</dbReference>
<dbReference type="InterPro" id="IPR023380">
    <property type="entry name" value="DsbB-like_sf"/>
</dbReference>
<dbReference type="PANTHER" id="PTHR36570">
    <property type="entry name" value="DISULFIDE BOND FORMATION PROTEIN B"/>
    <property type="match status" value="1"/>
</dbReference>
<dbReference type="PANTHER" id="PTHR36570:SF3">
    <property type="entry name" value="DISULFIDE BOND FORMATION PROTEIN B"/>
    <property type="match status" value="1"/>
</dbReference>
<dbReference type="Pfam" id="PF02600">
    <property type="entry name" value="DsbB"/>
    <property type="match status" value="1"/>
</dbReference>
<dbReference type="SUPFAM" id="SSF158442">
    <property type="entry name" value="DsbB-like"/>
    <property type="match status" value="1"/>
</dbReference>
<name>DSBB_NITOC</name>
<organism>
    <name type="scientific">Nitrosococcus oceani (strain ATCC 19707 / BCRC 17464 / JCM 30415 / NCIMB 11848 / C-107)</name>
    <dbReference type="NCBI Taxonomy" id="323261"/>
    <lineage>
        <taxon>Bacteria</taxon>
        <taxon>Pseudomonadati</taxon>
        <taxon>Pseudomonadota</taxon>
        <taxon>Gammaproteobacteria</taxon>
        <taxon>Chromatiales</taxon>
        <taxon>Chromatiaceae</taxon>
        <taxon>Nitrosococcus</taxon>
    </lineage>
</organism>
<proteinExistence type="inferred from homology"/>
<accession>Q3J7Z4</accession>
<feature type="chain" id="PRO_0000298373" description="Disulfide bond formation protein B">
    <location>
        <begin position="1"/>
        <end position="169"/>
    </location>
</feature>
<feature type="topological domain" description="Cytoplasmic" evidence="1">
    <location>
        <begin position="1"/>
        <end position="8"/>
    </location>
</feature>
<feature type="transmembrane region" description="Helical" evidence="1">
    <location>
        <begin position="9"/>
        <end position="25"/>
    </location>
</feature>
<feature type="topological domain" description="Periplasmic" evidence="1">
    <location>
        <begin position="26"/>
        <end position="43"/>
    </location>
</feature>
<feature type="transmembrane region" description="Helical" evidence="1">
    <location>
        <begin position="44"/>
        <end position="60"/>
    </location>
</feature>
<feature type="topological domain" description="Cytoplasmic" evidence="1">
    <location>
        <begin position="61"/>
        <end position="67"/>
    </location>
</feature>
<feature type="transmembrane region" description="Helical" evidence="1">
    <location>
        <begin position="68"/>
        <end position="84"/>
    </location>
</feature>
<feature type="topological domain" description="Periplasmic" evidence="1">
    <location>
        <begin position="85"/>
        <end position="141"/>
    </location>
</feature>
<feature type="transmembrane region" description="Helical" evidence="1">
    <location>
        <begin position="142"/>
        <end position="160"/>
    </location>
</feature>
<feature type="topological domain" description="Cytoplasmic" evidence="1">
    <location>
        <begin position="161"/>
        <end position="169"/>
    </location>
</feature>
<feature type="disulfide bond" description="Redox-active" evidence="1">
    <location>
        <begin position="35"/>
        <end position="38"/>
    </location>
</feature>
<feature type="disulfide bond" description="Redox-active" evidence="1">
    <location>
        <begin position="100"/>
        <end position="127"/>
    </location>
</feature>
<comment type="function">
    <text evidence="1">Required for disulfide bond formation in some periplasmic proteins. Acts by oxidizing the DsbA protein.</text>
</comment>
<comment type="subcellular location">
    <subcellularLocation>
        <location evidence="1">Cell inner membrane</location>
        <topology evidence="1">Multi-pass membrane protein</topology>
    </subcellularLocation>
</comment>
<comment type="similarity">
    <text evidence="1">Belongs to the DsbB family.</text>
</comment>
<reference key="1">
    <citation type="journal article" date="2006" name="Appl. Environ. Microbiol.">
        <title>Complete genome sequence of the marine, chemolithoautotrophic, ammonia-oxidizing bacterium Nitrosococcus oceani ATCC 19707.</title>
        <authorList>
            <person name="Klotz M.G."/>
            <person name="Arp D.J."/>
            <person name="Chain P.S.G."/>
            <person name="El-Sheikh A.F."/>
            <person name="Hauser L.J."/>
            <person name="Hommes N.G."/>
            <person name="Larimer F.W."/>
            <person name="Malfatti S.A."/>
            <person name="Norton J.M."/>
            <person name="Poret-Peterson A.T."/>
            <person name="Vergez L.M."/>
            <person name="Ward B.B."/>
        </authorList>
    </citation>
    <scope>NUCLEOTIDE SEQUENCE [LARGE SCALE GENOMIC DNA]</scope>
    <source>
        <strain>ATCC 19707 / BCRC 17464 / JCM 30415 / NCIMB 11848 / C-107</strain>
    </source>
</reference>
<protein>
    <recommendedName>
        <fullName evidence="1">Disulfide bond formation protein B</fullName>
    </recommendedName>
    <alternativeName>
        <fullName evidence="1">Disulfide oxidoreductase</fullName>
    </alternativeName>
</protein>
<evidence type="ECO:0000255" key="1">
    <source>
        <dbReference type="HAMAP-Rule" id="MF_00286"/>
    </source>
</evidence>
<gene>
    <name evidence="1" type="primary">dsbB</name>
    <name type="ordered locus">Noc_2599</name>
</gene>
<keyword id="KW-0997">Cell inner membrane</keyword>
<keyword id="KW-1003">Cell membrane</keyword>
<keyword id="KW-0143">Chaperone</keyword>
<keyword id="KW-1015">Disulfide bond</keyword>
<keyword id="KW-0249">Electron transport</keyword>
<keyword id="KW-0472">Membrane</keyword>
<keyword id="KW-0560">Oxidoreductase</keyword>
<keyword id="KW-0676">Redox-active center</keyword>
<keyword id="KW-1185">Reference proteome</keyword>
<keyword id="KW-0812">Transmembrane</keyword>
<keyword id="KW-1133">Transmembrane helix</keyword>
<keyword id="KW-0813">Transport</keyword>
<sequence length="169" mass="18351">MRLSVRWVFFLGFFLCALMLAIAGYFQFVENLEPCPLCILSRVAVLAIGGVFLVAALHNPKSWGIKVYALLGFVVTLIGIGITGRHVWLQSLPADQVPACGPGLNFMLDNFPLTETLELVFRGSGECAEVQWSFLGLTIPGWTLVAFLFLGVISLWQMGRTGGGAGKLT</sequence>